<keyword id="KW-0274">FAD</keyword>
<keyword id="KW-0285">Flavoprotein</keyword>
<keyword id="KW-0472">Membrane</keyword>
<keyword id="KW-0496">Mitochondrion</keyword>
<keyword id="KW-1000">Mitochondrion outer membrane</keyword>
<keyword id="KW-0520">NAD</keyword>
<keyword id="KW-0560">Oxidoreductase</keyword>
<keyword id="KW-1185">Reference proteome</keyword>
<keyword id="KW-0808">Transferase</keyword>
<keyword id="KW-0812">Transmembrane</keyword>
<keyword id="KW-1133">Transmembrane helix</keyword>
<accession>Q4PGW7</accession>
<accession>A0A0D1EAE4</accession>
<name>NCB5R_MYCMD</name>
<gene>
    <name type="primary">CBR1</name>
    <name type="ORF">UMAG_00646</name>
</gene>
<evidence type="ECO:0000250" key="1"/>
<evidence type="ECO:0000250" key="2">
    <source>
        <dbReference type="UniProtKB" id="P38626"/>
    </source>
</evidence>
<evidence type="ECO:0000255" key="3"/>
<evidence type="ECO:0000255" key="4">
    <source>
        <dbReference type="PROSITE-ProRule" id="PRU00716"/>
    </source>
</evidence>
<evidence type="ECO:0000305" key="5"/>
<reference key="1">
    <citation type="journal article" date="2006" name="Nature">
        <title>Insights from the genome of the biotrophic fungal plant pathogen Ustilago maydis.</title>
        <authorList>
            <person name="Kaemper J."/>
            <person name="Kahmann R."/>
            <person name="Boelker M."/>
            <person name="Ma L.-J."/>
            <person name="Brefort T."/>
            <person name="Saville B.J."/>
            <person name="Banuett F."/>
            <person name="Kronstad J.W."/>
            <person name="Gold S.E."/>
            <person name="Mueller O."/>
            <person name="Perlin M.H."/>
            <person name="Woesten H.A.B."/>
            <person name="de Vries R."/>
            <person name="Ruiz-Herrera J."/>
            <person name="Reynaga-Pena C.G."/>
            <person name="Snetselaar K."/>
            <person name="McCann M."/>
            <person name="Perez-Martin J."/>
            <person name="Feldbruegge M."/>
            <person name="Basse C.W."/>
            <person name="Steinberg G."/>
            <person name="Ibeas J.I."/>
            <person name="Holloman W."/>
            <person name="Guzman P."/>
            <person name="Farman M.L."/>
            <person name="Stajich J.E."/>
            <person name="Sentandreu R."/>
            <person name="Gonzalez-Prieto J.M."/>
            <person name="Kennell J.C."/>
            <person name="Molina L."/>
            <person name="Schirawski J."/>
            <person name="Mendoza-Mendoza A."/>
            <person name="Greilinger D."/>
            <person name="Muench K."/>
            <person name="Roessel N."/>
            <person name="Scherer M."/>
            <person name="Vranes M."/>
            <person name="Ladendorf O."/>
            <person name="Vincon V."/>
            <person name="Fuchs U."/>
            <person name="Sandrock B."/>
            <person name="Meng S."/>
            <person name="Ho E.C.H."/>
            <person name="Cahill M.J."/>
            <person name="Boyce K.J."/>
            <person name="Klose J."/>
            <person name="Klosterman S.J."/>
            <person name="Deelstra H.J."/>
            <person name="Ortiz-Castellanos L."/>
            <person name="Li W."/>
            <person name="Sanchez-Alonso P."/>
            <person name="Schreier P.H."/>
            <person name="Haeuser-Hahn I."/>
            <person name="Vaupel M."/>
            <person name="Koopmann E."/>
            <person name="Friedrich G."/>
            <person name="Voss H."/>
            <person name="Schlueter T."/>
            <person name="Margolis J."/>
            <person name="Platt D."/>
            <person name="Swimmer C."/>
            <person name="Gnirke A."/>
            <person name="Chen F."/>
            <person name="Vysotskaia V."/>
            <person name="Mannhaupt G."/>
            <person name="Gueldener U."/>
            <person name="Muensterkoetter M."/>
            <person name="Haase D."/>
            <person name="Oesterheld M."/>
            <person name="Mewes H.-W."/>
            <person name="Mauceli E.W."/>
            <person name="DeCaprio D."/>
            <person name="Wade C.M."/>
            <person name="Butler J."/>
            <person name="Young S.K."/>
            <person name="Jaffe D.B."/>
            <person name="Calvo S.E."/>
            <person name="Nusbaum C."/>
            <person name="Galagan J.E."/>
            <person name="Birren B.W."/>
        </authorList>
    </citation>
    <scope>NUCLEOTIDE SEQUENCE [LARGE SCALE GENOMIC DNA]</scope>
    <source>
        <strain>DSM 14603 / FGSC 9021 / UM521</strain>
    </source>
</reference>
<reference key="2">
    <citation type="submission" date="2014-09" db="EMBL/GenBank/DDBJ databases">
        <authorList>
            <person name="Gueldener U."/>
            <person name="Muensterkoetter M."/>
            <person name="Walter M.C."/>
            <person name="Mannhaupt G."/>
            <person name="Kahmann R."/>
        </authorList>
    </citation>
    <scope>GENOME REANNOTATION</scope>
    <source>
        <strain>DSM 14603 / FGSC 9021 / UM521</strain>
    </source>
</reference>
<dbReference type="EC" id="1.6.2.2" evidence="2"/>
<dbReference type="EMBL" id="CM003140">
    <property type="protein sequence ID" value="KIS72231.1"/>
    <property type="molecule type" value="Genomic_DNA"/>
</dbReference>
<dbReference type="RefSeq" id="XP_011386456.1">
    <property type="nucleotide sequence ID" value="XM_011388154.1"/>
</dbReference>
<dbReference type="SMR" id="Q4PGW7"/>
<dbReference type="FunCoup" id="Q4PGW7">
    <property type="interactions" value="133"/>
</dbReference>
<dbReference type="STRING" id="237631.Q4PGW7"/>
<dbReference type="EnsemblFungi" id="KIS72231">
    <property type="protein sequence ID" value="KIS72231"/>
    <property type="gene ID" value="UMAG_00646"/>
</dbReference>
<dbReference type="GeneID" id="23561889"/>
<dbReference type="KEGG" id="uma:UMAG_00646"/>
<dbReference type="VEuPathDB" id="FungiDB:UMAG_00646"/>
<dbReference type="eggNOG" id="KOG0534">
    <property type="taxonomic scope" value="Eukaryota"/>
</dbReference>
<dbReference type="HOGENOM" id="CLU_003827_9_0_1"/>
<dbReference type="InParanoid" id="Q4PGW7"/>
<dbReference type="OMA" id="VQIFMCG"/>
<dbReference type="OrthoDB" id="432685at2759"/>
<dbReference type="UniPathway" id="UPA00559"/>
<dbReference type="Proteomes" id="UP000000561">
    <property type="component" value="Chromosome 1"/>
</dbReference>
<dbReference type="GO" id="GO:0005741">
    <property type="term" value="C:mitochondrial outer membrane"/>
    <property type="evidence" value="ECO:0007669"/>
    <property type="project" value="UniProtKB-SubCell"/>
</dbReference>
<dbReference type="GO" id="GO:0090560">
    <property type="term" value="F:2-(3-amino-3-carboxypropyl)histidine synthase activity"/>
    <property type="evidence" value="ECO:0007669"/>
    <property type="project" value="EnsemblFungi"/>
</dbReference>
<dbReference type="GO" id="GO:0004128">
    <property type="term" value="F:cytochrome-b5 reductase activity, acting on NAD(P)H"/>
    <property type="evidence" value="ECO:0000250"/>
    <property type="project" value="UniProtKB"/>
</dbReference>
<dbReference type="GO" id="GO:0003954">
    <property type="term" value="F:NADH dehydrogenase activity"/>
    <property type="evidence" value="ECO:0000250"/>
    <property type="project" value="UniProtKB"/>
</dbReference>
<dbReference type="GO" id="GO:0017183">
    <property type="term" value="P:protein histidyl modification to diphthamide"/>
    <property type="evidence" value="ECO:0000250"/>
    <property type="project" value="UniProtKB"/>
</dbReference>
<dbReference type="GO" id="GO:0002926">
    <property type="term" value="P:tRNA wobble base 5-methoxycarbonylmethyl-2-thiouridinylation"/>
    <property type="evidence" value="ECO:0000250"/>
    <property type="project" value="UniProtKB"/>
</dbReference>
<dbReference type="CDD" id="cd06183">
    <property type="entry name" value="cyt_b5_reduct_like"/>
    <property type="match status" value="1"/>
</dbReference>
<dbReference type="FunFam" id="2.40.30.10:FF:000032">
    <property type="entry name" value="NADH-cytochrome b5 reductase"/>
    <property type="match status" value="1"/>
</dbReference>
<dbReference type="FunFam" id="3.40.50.80:FF:000019">
    <property type="entry name" value="NADH-cytochrome b5 reductase"/>
    <property type="match status" value="1"/>
</dbReference>
<dbReference type="Gene3D" id="3.40.50.80">
    <property type="entry name" value="Nucleotide-binding domain of ferredoxin-NADP reductase (FNR) module"/>
    <property type="match status" value="1"/>
</dbReference>
<dbReference type="Gene3D" id="2.40.30.10">
    <property type="entry name" value="Translation factors"/>
    <property type="match status" value="1"/>
</dbReference>
<dbReference type="InterPro" id="IPR001834">
    <property type="entry name" value="CBR-like"/>
</dbReference>
<dbReference type="InterPro" id="IPR008333">
    <property type="entry name" value="Cbr1-like_FAD-bd_dom"/>
</dbReference>
<dbReference type="InterPro" id="IPR017927">
    <property type="entry name" value="FAD-bd_FR_type"/>
</dbReference>
<dbReference type="InterPro" id="IPR001709">
    <property type="entry name" value="Flavoprot_Pyr_Nucl_cyt_Rdtase"/>
</dbReference>
<dbReference type="InterPro" id="IPR039261">
    <property type="entry name" value="FNR_nucleotide-bd"/>
</dbReference>
<dbReference type="InterPro" id="IPR001433">
    <property type="entry name" value="OxRdtase_FAD/NAD-bd"/>
</dbReference>
<dbReference type="InterPro" id="IPR017938">
    <property type="entry name" value="Riboflavin_synthase-like_b-brl"/>
</dbReference>
<dbReference type="PANTHER" id="PTHR19370">
    <property type="entry name" value="NADH-CYTOCHROME B5 REDUCTASE"/>
    <property type="match status" value="1"/>
</dbReference>
<dbReference type="PANTHER" id="PTHR19370:SF184">
    <property type="entry name" value="NADH-CYTOCHROME B5 REDUCTASE-LIKE"/>
    <property type="match status" value="1"/>
</dbReference>
<dbReference type="Pfam" id="PF00970">
    <property type="entry name" value="FAD_binding_6"/>
    <property type="match status" value="1"/>
</dbReference>
<dbReference type="Pfam" id="PF00175">
    <property type="entry name" value="NAD_binding_1"/>
    <property type="match status" value="1"/>
</dbReference>
<dbReference type="PRINTS" id="PR00406">
    <property type="entry name" value="CYTB5RDTASE"/>
</dbReference>
<dbReference type="PRINTS" id="PR00371">
    <property type="entry name" value="FPNCR"/>
</dbReference>
<dbReference type="SUPFAM" id="SSF52343">
    <property type="entry name" value="Ferredoxin reductase-like, C-terminal NADP-linked domain"/>
    <property type="match status" value="1"/>
</dbReference>
<dbReference type="SUPFAM" id="SSF63380">
    <property type="entry name" value="Riboflavin synthase domain-like"/>
    <property type="match status" value="1"/>
</dbReference>
<dbReference type="PROSITE" id="PS51384">
    <property type="entry name" value="FAD_FR"/>
    <property type="match status" value="1"/>
</dbReference>
<comment type="function">
    <text evidence="2">NADH-dependent reductase for DPH3 and cytochrome b5. Required for the first step of diphthamide biosynthesis, a post-translational modification of histidine which occurs in elongation factor 2. DPH1 and DPH2 transfer a 3-amino-3-carboxypropyl (ACP) group from S-adenosyl-L-methionine (SAM) to a histidine residue, the reaction is assisted by a reduction system comprising DPH3 and a NADH-dependent reductase, predominantly CBR1. By reducing DPH3, also involved in the formation of the tRNA wobble base modification mcm5s 2U (5-methoxycarbonylmethyl-2-thiouridine), mediated by the elongator complex. The cytochrome b5/NADH cytochrome b5 reductase electron transfer system supports the catalytic activity of several sterol biosynthetic enzymes.</text>
</comment>
<comment type="catalytic activity">
    <reaction evidence="2">
        <text>2 Fe(III)-[cytochrome b5] + NADH = 2 Fe(II)-[cytochrome b5] + NAD(+) + H(+)</text>
        <dbReference type="Rhea" id="RHEA:46680"/>
        <dbReference type="Rhea" id="RHEA-COMP:10438"/>
        <dbReference type="Rhea" id="RHEA-COMP:10439"/>
        <dbReference type="ChEBI" id="CHEBI:15378"/>
        <dbReference type="ChEBI" id="CHEBI:29033"/>
        <dbReference type="ChEBI" id="CHEBI:29034"/>
        <dbReference type="ChEBI" id="CHEBI:57540"/>
        <dbReference type="ChEBI" id="CHEBI:57945"/>
        <dbReference type="EC" id="1.6.2.2"/>
    </reaction>
</comment>
<comment type="catalytic activity">
    <reaction evidence="2">
        <text>2 Fe(3+)-[Dph3] + NADH = 2 Fe(2+)-[Dph3] + NAD(+) + H(+)</text>
        <dbReference type="Rhea" id="RHEA:71231"/>
        <dbReference type="Rhea" id="RHEA-COMP:18002"/>
        <dbReference type="Rhea" id="RHEA-COMP:18003"/>
        <dbReference type="ChEBI" id="CHEBI:15378"/>
        <dbReference type="ChEBI" id="CHEBI:29033"/>
        <dbReference type="ChEBI" id="CHEBI:29034"/>
        <dbReference type="ChEBI" id="CHEBI:57540"/>
        <dbReference type="ChEBI" id="CHEBI:57945"/>
        <dbReference type="ChEBI" id="CHEBI:83228"/>
    </reaction>
    <physiologicalReaction direction="left-to-right" evidence="2">
        <dbReference type="Rhea" id="RHEA:71232"/>
    </physiologicalReaction>
</comment>
<comment type="cofactor">
    <cofactor evidence="3">
        <name>FAD</name>
        <dbReference type="ChEBI" id="CHEBI:57692"/>
    </cofactor>
</comment>
<comment type="pathway">
    <text evidence="2">Protein modification; peptidyl-diphthamide biosynthesis.</text>
</comment>
<comment type="subunit">
    <text evidence="2">Monomer. Component of the 2-(3-amino-3-carboxypropyl)histidine synthase complex composed of DPH1, DPH2, DPH3 and a NADH-dependent reductase, predominantly CBR1.</text>
</comment>
<comment type="subcellular location">
    <subcellularLocation>
        <location evidence="2">Mitochondrion outer membrane</location>
        <topology evidence="3">Single-pass membrane protein</topology>
    </subcellularLocation>
</comment>
<comment type="similarity">
    <text evidence="5">Belongs to the flavoprotein pyridine nucleotide cytochrome reductase family.</text>
</comment>
<proteinExistence type="inferred from homology"/>
<organism>
    <name type="scientific">Mycosarcoma maydis</name>
    <name type="common">Corn smut fungus</name>
    <name type="synonym">Ustilago maydis</name>
    <dbReference type="NCBI Taxonomy" id="5270"/>
    <lineage>
        <taxon>Eukaryota</taxon>
        <taxon>Fungi</taxon>
        <taxon>Dikarya</taxon>
        <taxon>Basidiomycota</taxon>
        <taxon>Ustilaginomycotina</taxon>
        <taxon>Ustilaginomycetes</taxon>
        <taxon>Ustilaginales</taxon>
        <taxon>Ustilaginaceae</taxon>
        <taxon>Mycosarcoma</taxon>
    </lineage>
</organism>
<sequence length="324" mass="36028">MVLIEQVVLVASILITFGTCLAATKYAARLFPHFEPLQFYDEATNPMELNIVLAFVVGLIGSVVVLLYFDSQKIKPVLNPTQWQQYRLMEKQKLSDNTALYRFKLPRSNNILGLPIGQHISVQANMGGKTVVRSYTPTSSDDDHGFFDLVVKSYEQGNVSKYIGSMKIGDLLSVKGPKGQMRYAPGLSRHIGMIAGGTGLTPCLQIIRAALKNPADKTQIDFIYANVKETDILLKDELDELALKHKDQFRISYFLNEAPEGWKGGVGFVTKEALEKNLPKPANDIKVLMCGPPPMIKAMTGHLEALGYEKPRTVSKLEDQVFCF</sequence>
<protein>
    <recommendedName>
        <fullName>NADH-cytochrome b5 reductase 1</fullName>
        <ecNumber evidence="2">1.6.2.2</ecNumber>
    </recommendedName>
    <alternativeName>
        <fullName>Microsomal cytochrome b reductase</fullName>
    </alternativeName>
</protein>
<feature type="chain" id="PRO_0000330164" description="NADH-cytochrome b5 reductase 1">
    <location>
        <begin position="1"/>
        <end position="324"/>
    </location>
</feature>
<feature type="transmembrane region" description="Helical" evidence="3">
    <location>
        <begin position="49"/>
        <end position="69"/>
    </location>
</feature>
<feature type="domain" description="FAD-binding FR-type" evidence="4">
    <location>
        <begin position="81"/>
        <end position="184"/>
    </location>
</feature>
<feature type="binding site" evidence="1">
    <location>
        <begin position="164"/>
        <end position="179"/>
    </location>
    <ligand>
        <name>FAD</name>
        <dbReference type="ChEBI" id="CHEBI:57692"/>
    </ligand>
</feature>
<feature type="binding site" evidence="1">
    <location>
        <begin position="190"/>
        <end position="222"/>
    </location>
    <ligand>
        <name>FAD</name>
        <dbReference type="ChEBI" id="CHEBI:57692"/>
    </ligand>
</feature>